<protein>
    <recommendedName>
        <fullName>Uncharacterized protein MT2330.2</fullName>
    </recommendedName>
</protein>
<reference key="1">
    <citation type="journal article" date="2002" name="J. Bacteriol.">
        <title>Whole-genome comparison of Mycobacterium tuberculosis clinical and laboratory strains.</title>
        <authorList>
            <person name="Fleischmann R.D."/>
            <person name="Alland D."/>
            <person name="Eisen J.A."/>
            <person name="Carpenter L."/>
            <person name="White O."/>
            <person name="Peterson J.D."/>
            <person name="DeBoy R.T."/>
            <person name="Dodson R.J."/>
            <person name="Gwinn M.L."/>
            <person name="Haft D.H."/>
            <person name="Hickey E.K."/>
            <person name="Kolonay J.F."/>
            <person name="Nelson W.C."/>
            <person name="Umayam L.A."/>
            <person name="Ermolaeva M.D."/>
            <person name="Salzberg S.L."/>
            <person name="Delcher A."/>
            <person name="Utterback T.R."/>
            <person name="Weidman J.F."/>
            <person name="Khouri H.M."/>
            <person name="Gill J."/>
            <person name="Mikula A."/>
            <person name="Bishai W."/>
            <person name="Jacobs W.R. Jr."/>
            <person name="Venter J.C."/>
            <person name="Fraser C.M."/>
        </authorList>
    </citation>
    <scope>NUCLEOTIDE SEQUENCE [LARGE SCALE GENOMIC DNA]</scope>
    <source>
        <strain>CDC 1551 / Oshkosh</strain>
    </source>
</reference>
<dbReference type="EMBL" id="AE000516">
    <property type="status" value="NOT_ANNOTATED_CDS"/>
    <property type="molecule type" value="Genomic_DNA"/>
</dbReference>
<dbReference type="PIR" id="A70730">
    <property type="entry name" value="A70730"/>
</dbReference>
<dbReference type="RefSeq" id="WP_003902155.1">
    <property type="nucleotide sequence ID" value="NZ_KK341227.1"/>
</dbReference>
<dbReference type="Proteomes" id="UP000001020">
    <property type="component" value="Chromosome"/>
</dbReference>
<organism>
    <name type="scientific">Mycobacterium tuberculosis (strain CDC 1551 / Oshkosh)</name>
    <dbReference type="NCBI Taxonomy" id="83331"/>
    <lineage>
        <taxon>Bacteria</taxon>
        <taxon>Bacillati</taxon>
        <taxon>Actinomycetota</taxon>
        <taxon>Actinomycetes</taxon>
        <taxon>Mycobacteriales</taxon>
        <taxon>Mycobacteriaceae</taxon>
        <taxon>Mycobacterium</taxon>
        <taxon>Mycobacterium tuberculosis complex</taxon>
    </lineage>
</organism>
<gene>
    <name type="ordered locus">MT2330.2</name>
</gene>
<keyword id="KW-1185">Reference proteome</keyword>
<name>Y2269_MYCTO</name>
<proteinExistence type="inferred from homology"/>
<comment type="function">
    <text evidence="1">May play a regulatory role in sulfomenaquinone (SMK) biosynthesis.</text>
</comment>
<evidence type="ECO:0000250" key="1">
    <source>
        <dbReference type="UniProtKB" id="P9WLF9"/>
    </source>
</evidence>
<accession>P9WLF8</accession>
<accession>L0T9B6</accession>
<accession>P64965</accession>
<accession>Q50694</accession>
<sequence>MANDARPLARLANCRVGDQSSATHAYTVGPVLGVPPTGGVDLRYGGRAGIGRSETVTDHGAVGRRYHQPCAGQIRLSELRVTILLRCETLCETAQLLRCPPLPCDCSTPL</sequence>
<feature type="chain" id="PRO_0000427486" description="Uncharacterized protein MT2330.2">
    <location>
        <begin position="1"/>
        <end position="110"/>
    </location>
</feature>